<organism>
    <name type="scientific">Homo sapiens</name>
    <name type="common">Human</name>
    <dbReference type="NCBI Taxonomy" id="9606"/>
    <lineage>
        <taxon>Eukaryota</taxon>
        <taxon>Metazoa</taxon>
        <taxon>Chordata</taxon>
        <taxon>Craniata</taxon>
        <taxon>Vertebrata</taxon>
        <taxon>Euteleostomi</taxon>
        <taxon>Mammalia</taxon>
        <taxon>Eutheria</taxon>
        <taxon>Euarchontoglires</taxon>
        <taxon>Primates</taxon>
        <taxon>Haplorrhini</taxon>
        <taxon>Catarrhini</taxon>
        <taxon>Hominidae</taxon>
        <taxon>Homo</taxon>
    </lineage>
</organism>
<dbReference type="EMBL" id="AL121753">
    <property type="status" value="NOT_ANNOTATED_CDS"/>
    <property type="molecule type" value="Genomic_DNA"/>
</dbReference>
<dbReference type="EMBL" id="CH471077">
    <property type="protein sequence ID" value="EAW76218.1"/>
    <property type="molecule type" value="Genomic_DNA"/>
</dbReference>
<dbReference type="EMBL" id="BC113483">
    <property type="protein sequence ID" value="AAI13484.1"/>
    <property type="molecule type" value="mRNA"/>
</dbReference>
<dbReference type="EMBL" id="AK091138">
    <property type="protein sequence ID" value="BAC03594.1"/>
    <property type="status" value="ALT_INIT"/>
    <property type="molecule type" value="mRNA"/>
</dbReference>
<dbReference type="CCDS" id="CCDS13251.1"/>
<dbReference type="RefSeq" id="NP_848563.1">
    <property type="nucleotide sequence ID" value="NM_178468.6"/>
</dbReference>
<dbReference type="SMR" id="Q9BQN1"/>
<dbReference type="BioGRID" id="126173">
    <property type="interactions" value="3"/>
</dbReference>
<dbReference type="FunCoup" id="Q9BQN1">
    <property type="interactions" value="34"/>
</dbReference>
<dbReference type="IntAct" id="Q9BQN1">
    <property type="interactions" value="4"/>
</dbReference>
<dbReference type="MINT" id="Q9BQN1"/>
<dbReference type="STRING" id="9606.ENSP00000363529"/>
<dbReference type="GlyGen" id="Q9BQN1">
    <property type="glycosylation" value="2 sites, 1 O-linked glycan (1 site)"/>
</dbReference>
<dbReference type="iPTMnet" id="Q9BQN1"/>
<dbReference type="PhosphoSitePlus" id="Q9BQN1"/>
<dbReference type="BioMuta" id="FAM83C"/>
<dbReference type="DMDM" id="152031601"/>
<dbReference type="MassIVE" id="Q9BQN1"/>
<dbReference type="PaxDb" id="9606-ENSP00000363529"/>
<dbReference type="PeptideAtlas" id="Q9BQN1"/>
<dbReference type="ProteomicsDB" id="78702"/>
<dbReference type="Antibodypedia" id="74559">
    <property type="antibodies" value="7 antibodies from 6 providers"/>
</dbReference>
<dbReference type="DNASU" id="128876"/>
<dbReference type="Ensembl" id="ENST00000374408.4">
    <property type="protein sequence ID" value="ENSP00000363529.3"/>
    <property type="gene ID" value="ENSG00000125998.8"/>
</dbReference>
<dbReference type="GeneID" id="128876"/>
<dbReference type="KEGG" id="hsa:128876"/>
<dbReference type="MANE-Select" id="ENST00000374408.4">
    <property type="protein sequence ID" value="ENSP00000363529.3"/>
    <property type="RefSeq nucleotide sequence ID" value="NM_178468.6"/>
    <property type="RefSeq protein sequence ID" value="NP_848563.1"/>
</dbReference>
<dbReference type="UCSC" id="uc021wck.2">
    <property type="organism name" value="human"/>
</dbReference>
<dbReference type="AGR" id="HGNC:16121"/>
<dbReference type="CTD" id="128876"/>
<dbReference type="DisGeNET" id="128876"/>
<dbReference type="GeneCards" id="FAM83C"/>
<dbReference type="HGNC" id="HGNC:16121">
    <property type="gene designation" value="FAM83C"/>
</dbReference>
<dbReference type="HPA" id="ENSG00000125998">
    <property type="expression patterns" value="Group enriched (esophagus, skin, vagina)"/>
</dbReference>
<dbReference type="MalaCards" id="FAM83C"/>
<dbReference type="neXtProt" id="NX_Q9BQN1"/>
<dbReference type="OpenTargets" id="ENSG00000125998"/>
<dbReference type="PharmGKB" id="PA25669"/>
<dbReference type="VEuPathDB" id="HostDB:ENSG00000125998"/>
<dbReference type="eggNOG" id="ENOG502QQ4N">
    <property type="taxonomic scope" value="Eukaryota"/>
</dbReference>
<dbReference type="GeneTree" id="ENSGT00940000160254"/>
<dbReference type="HOGENOM" id="CLU_020214_0_0_1"/>
<dbReference type="InParanoid" id="Q9BQN1"/>
<dbReference type="OMA" id="DYMTSHV"/>
<dbReference type="OrthoDB" id="9944987at2759"/>
<dbReference type="PAN-GO" id="Q9BQN1">
    <property type="GO annotations" value="2 GO annotations based on evolutionary models"/>
</dbReference>
<dbReference type="PhylomeDB" id="Q9BQN1"/>
<dbReference type="TreeFam" id="TF330777"/>
<dbReference type="PathwayCommons" id="Q9BQN1"/>
<dbReference type="SignaLink" id="Q9BQN1"/>
<dbReference type="SIGNOR" id="Q9BQN1"/>
<dbReference type="BioGRID-ORCS" id="128876">
    <property type="hits" value="13 hits in 1139 CRISPR screens"/>
</dbReference>
<dbReference type="GenomeRNAi" id="128876"/>
<dbReference type="Pharos" id="Q9BQN1">
    <property type="development level" value="Tdark"/>
</dbReference>
<dbReference type="PRO" id="PR:Q9BQN1"/>
<dbReference type="Proteomes" id="UP000005640">
    <property type="component" value="Chromosome 20"/>
</dbReference>
<dbReference type="RNAct" id="Q9BQN1">
    <property type="molecule type" value="protein"/>
</dbReference>
<dbReference type="Bgee" id="ENSG00000125998">
    <property type="expression patterns" value="Expressed in gingival epithelium and 56 other cell types or tissues"/>
</dbReference>
<dbReference type="GO" id="GO:0019901">
    <property type="term" value="F:protein kinase binding"/>
    <property type="evidence" value="ECO:0000353"/>
    <property type="project" value="UniProtKB"/>
</dbReference>
<dbReference type="GO" id="GO:0007165">
    <property type="term" value="P:signal transduction"/>
    <property type="evidence" value="ECO:0000318"/>
    <property type="project" value="GO_Central"/>
</dbReference>
<dbReference type="CDD" id="cd09183">
    <property type="entry name" value="PLDc_FAM83C_N"/>
    <property type="match status" value="1"/>
</dbReference>
<dbReference type="FunFam" id="3.30.870.10:FF:000004">
    <property type="entry name" value="protein FAM83H isoform X2"/>
    <property type="match status" value="1"/>
</dbReference>
<dbReference type="Gene3D" id="3.30.870.10">
    <property type="entry name" value="Endonuclease Chain A"/>
    <property type="match status" value="1"/>
</dbReference>
<dbReference type="InterPro" id="IPR050944">
    <property type="entry name" value="FAM83"/>
</dbReference>
<dbReference type="InterPro" id="IPR012461">
    <property type="entry name" value="SACK1"/>
</dbReference>
<dbReference type="PANTHER" id="PTHR16181">
    <property type="entry name" value="PROTEIN FAM83A-RELATED"/>
    <property type="match status" value="1"/>
</dbReference>
<dbReference type="PANTHER" id="PTHR16181:SF29">
    <property type="entry name" value="PROTEIN FAM83A-RELATED"/>
    <property type="match status" value="1"/>
</dbReference>
<dbReference type="Pfam" id="PF07894">
    <property type="entry name" value="SACK1"/>
    <property type="match status" value="1"/>
</dbReference>
<dbReference type="SUPFAM" id="SSF56024">
    <property type="entry name" value="Phospholipase D/nuclease"/>
    <property type="match status" value="1"/>
</dbReference>
<protein>
    <recommendedName>
        <fullName evidence="5">Protein FAM83C</fullName>
    </recommendedName>
</protein>
<accession>Q9BQN1</accession>
<accession>Q14D67</accession>
<accession>Q5JWN6</accession>
<accession>Q8N276</accession>
<keyword id="KW-0963">Cytoplasm</keyword>
<keyword id="KW-1267">Proteomics identification</keyword>
<keyword id="KW-1185">Reference proteome</keyword>
<name>FA83C_HUMAN</name>
<comment type="function">
    <text evidence="4">May play a role in MAPK signaling.</text>
</comment>
<comment type="subunit">
    <text evidence="2">May interact with RAF1.</text>
</comment>
<comment type="interaction">
    <interactant intactId="EBI-1220251">
        <id>Q9BQN1</id>
    </interactant>
    <interactant intactId="EBI-1383726">
        <id>P48729</id>
        <label>CSNK1A1</label>
    </interactant>
    <organismsDiffer>false</organismsDiffer>
    <experiments>6</experiments>
</comment>
<comment type="subcellular location">
    <subcellularLocation>
        <location evidence="3">Cytoplasm</location>
    </subcellularLocation>
    <text evidence="3">Displays distinct fibrous patterns in the cytoplasm and in the vicinity of membrane ruffles. In the presence of CSNK1A1, localizes along fibrous structures.</text>
</comment>
<comment type="domain">
    <text evidence="6">All members of the FAM83 family of proteins share a conserved N-terminal DUF1669 (domain of unknown function 1669) domain of about 300 amino acids. This domain mediates the interaction with casein kinase 1 (CK1) isoforms. Therefore, it has been proposed to rename DUF1669 the polypeptide anchor of CK1 domain.</text>
</comment>
<comment type="PTM">
    <text evidence="3">Phosphorylated in vitro by CSNK1A1.</text>
</comment>
<comment type="similarity">
    <text evidence="5">Belongs to the FAM83 family.</text>
</comment>
<comment type="sequence caution" evidence="5">
    <conflict type="erroneous initiation">
        <sequence resource="EMBL-CDS" id="BAC03594"/>
    </conflict>
    <text>Truncated N-terminus.</text>
</comment>
<feature type="chain" id="PRO_0000079459" description="Protein FAM83C">
    <location>
        <begin position="1"/>
        <end position="747"/>
    </location>
</feature>
<feature type="region of interest" description="DUF1669" evidence="6">
    <location>
        <begin position="1"/>
        <end position="309"/>
    </location>
</feature>
<feature type="region of interest" description="Disordered" evidence="1">
    <location>
        <begin position="322"/>
        <end position="352"/>
    </location>
</feature>
<feature type="region of interest" description="Disordered" evidence="1">
    <location>
        <begin position="374"/>
        <end position="412"/>
    </location>
</feature>
<feature type="region of interest" description="Disordered" evidence="1">
    <location>
        <begin position="462"/>
        <end position="484"/>
    </location>
</feature>
<feature type="region of interest" description="Disordered" evidence="1">
    <location>
        <begin position="517"/>
        <end position="550"/>
    </location>
</feature>
<feature type="region of interest" description="Disordered" evidence="1">
    <location>
        <begin position="588"/>
        <end position="633"/>
    </location>
</feature>
<feature type="region of interest" description="Disordered" evidence="1">
    <location>
        <begin position="646"/>
        <end position="672"/>
    </location>
</feature>
<feature type="region of interest" description="Disordered" evidence="1">
    <location>
        <begin position="692"/>
        <end position="715"/>
    </location>
</feature>
<feature type="compositionally biased region" description="Low complexity" evidence="1">
    <location>
        <begin position="328"/>
        <end position="350"/>
    </location>
</feature>
<feature type="compositionally biased region" description="Polar residues" evidence="1">
    <location>
        <begin position="390"/>
        <end position="402"/>
    </location>
</feature>
<feature type="compositionally biased region" description="Gly residues" evidence="1">
    <location>
        <begin position="697"/>
        <end position="707"/>
    </location>
</feature>
<feature type="sequence variant" id="VAR_053900" description="In dbSNP:rs35162625.">
    <original>E</original>
    <variation>K</variation>
    <location>
        <position position="134"/>
    </location>
</feature>
<feature type="sequence variant" id="VAR_053901" description="In dbSNP:rs35560631.">
    <original>Y</original>
    <variation>H</variation>
    <location>
        <position position="600"/>
    </location>
</feature>
<feature type="sequence variant" id="VAR_021946" description="In dbSNP:rs2425049.">
    <original>R</original>
    <variation>Q</variation>
    <location>
        <position position="621"/>
    </location>
</feature>
<feature type="sequence variant" id="VAR_053902" description="In dbSNP:rs35518957.">
    <original>R</original>
    <variation>C</variation>
    <location>
        <position position="645"/>
    </location>
</feature>
<feature type="mutagenesis site" description="Diffuse cytoplasmic localization, loss of localization along fibrous structures, possibly due to loss of interaction with CSNK1A1." evidence="3">
    <original>D</original>
    <variation>A</variation>
    <location>
        <position position="259"/>
    </location>
</feature>
<feature type="mutagenesis site" description="Diffuse cytoplasmic localization, loss of localization along fibrous structures, possibly due to loss of interaction with CSNK1A1." evidence="3">
    <original>F</original>
    <variation>A</variation>
    <location>
        <position position="293"/>
    </location>
</feature>
<feature type="sequence conflict" description="In Ref. 4; BAC03594." evidence="5" ref="4">
    <original>G</original>
    <variation>E</variation>
    <location>
        <position position="442"/>
    </location>
</feature>
<feature type="sequence conflict" description="In Ref. 4; BAC03594." evidence="5" ref="4">
    <original>D</original>
    <variation>V</variation>
    <location>
        <position position="728"/>
    </location>
</feature>
<sequence>MFGGPGPGVLGAQGMAGPLRGRVEELKLPWWRESSPLVLRHSEAARLAADALLERGEAAYLRVISEERELPFLSALDVDYMTSHVRGGPELSEAQGQEASGPDRLSLLSEVTSGTYFPMASDIDPPDLDLGWPEVPQATGFSPTQAVVHFQRDKAKNIKDLLRFLFSQAHTVVAVVMDIFTDMELLCDLMEASSRRGVPVYLLLAQEHLRHFLEMCYKMDLNGEHLPNMRVRSTCGDTYCSKAGRRFTGQALEKFVLIDCEQVVAGSYSFTWLCSQAHTSMVLQLRGRIVEDFDREFRCLYAESQPVEGFCGGEDPLSPRALRPPPVALAFRPDVPSPTSSLPSSTSLSSIKQSPLMGRSSYLALPGGGDCSDTGVVSSSLGPARREASGQPSLHRQLSDPNHGSPPGLYRANLGKLGAYPWSQSSPALNHNSTSPLTLAVGSPLLPRSRPLLQFHRGAPALSRFPENGLPGSQEPSPLRGRWVPGTTLETVEEKEKKASPSQSRGQLDLLVPFPRAREVGDPDSGVTPNSGPLRPGEQAPEDRRLSPSQADSQLDLLSRALGTGGAPELGSLRPGDRALEDRRLSLNQSRGQSDLLMQYPKAQGSRVPLETNSSARPARRAPDERRQTLGHSQLDLITKFGPFRGEGPGPNGLPISSPARTAGAGSGDEKRLTLGHSKLDLITKYHQLHGARQGTEPGGPKGGHLNGGNSDLVRDEKRLTLGHSKLDLITKYNKSKFKQLRSRFES</sequence>
<proteinExistence type="evidence at protein level"/>
<reference key="1">
    <citation type="journal article" date="2001" name="Nature">
        <title>The DNA sequence and comparative analysis of human chromosome 20.</title>
        <authorList>
            <person name="Deloukas P."/>
            <person name="Matthews L.H."/>
            <person name="Ashurst J.L."/>
            <person name="Burton J."/>
            <person name="Gilbert J.G.R."/>
            <person name="Jones M."/>
            <person name="Stavrides G."/>
            <person name="Almeida J.P."/>
            <person name="Babbage A.K."/>
            <person name="Bagguley C.L."/>
            <person name="Bailey J."/>
            <person name="Barlow K.F."/>
            <person name="Bates K.N."/>
            <person name="Beard L.M."/>
            <person name="Beare D.M."/>
            <person name="Beasley O.P."/>
            <person name="Bird C.P."/>
            <person name="Blakey S.E."/>
            <person name="Bridgeman A.M."/>
            <person name="Brown A.J."/>
            <person name="Buck D."/>
            <person name="Burrill W.D."/>
            <person name="Butler A.P."/>
            <person name="Carder C."/>
            <person name="Carter N.P."/>
            <person name="Chapman J.C."/>
            <person name="Clamp M."/>
            <person name="Clark G."/>
            <person name="Clark L.N."/>
            <person name="Clark S.Y."/>
            <person name="Clee C.M."/>
            <person name="Clegg S."/>
            <person name="Cobley V.E."/>
            <person name="Collier R.E."/>
            <person name="Connor R.E."/>
            <person name="Corby N.R."/>
            <person name="Coulson A."/>
            <person name="Coville G.J."/>
            <person name="Deadman R."/>
            <person name="Dhami P.D."/>
            <person name="Dunn M."/>
            <person name="Ellington A.G."/>
            <person name="Frankland J.A."/>
            <person name="Fraser A."/>
            <person name="French L."/>
            <person name="Garner P."/>
            <person name="Grafham D.V."/>
            <person name="Griffiths C."/>
            <person name="Griffiths M.N.D."/>
            <person name="Gwilliam R."/>
            <person name="Hall R.E."/>
            <person name="Hammond S."/>
            <person name="Harley J.L."/>
            <person name="Heath P.D."/>
            <person name="Ho S."/>
            <person name="Holden J.L."/>
            <person name="Howden P.J."/>
            <person name="Huckle E."/>
            <person name="Hunt A.R."/>
            <person name="Hunt S.E."/>
            <person name="Jekosch K."/>
            <person name="Johnson C.M."/>
            <person name="Johnson D."/>
            <person name="Kay M.P."/>
            <person name="Kimberley A.M."/>
            <person name="King A."/>
            <person name="Knights A."/>
            <person name="Laird G.K."/>
            <person name="Lawlor S."/>
            <person name="Lehvaeslaiho M.H."/>
            <person name="Leversha M.A."/>
            <person name="Lloyd C."/>
            <person name="Lloyd D.M."/>
            <person name="Lovell J.D."/>
            <person name="Marsh V.L."/>
            <person name="Martin S.L."/>
            <person name="McConnachie L.J."/>
            <person name="McLay K."/>
            <person name="McMurray A.A."/>
            <person name="Milne S.A."/>
            <person name="Mistry D."/>
            <person name="Moore M.J.F."/>
            <person name="Mullikin J.C."/>
            <person name="Nickerson T."/>
            <person name="Oliver K."/>
            <person name="Parker A."/>
            <person name="Patel R."/>
            <person name="Pearce T.A.V."/>
            <person name="Peck A.I."/>
            <person name="Phillimore B.J.C.T."/>
            <person name="Prathalingam S.R."/>
            <person name="Plumb R.W."/>
            <person name="Ramsay H."/>
            <person name="Rice C.M."/>
            <person name="Ross M.T."/>
            <person name="Scott C.E."/>
            <person name="Sehra H.K."/>
            <person name="Shownkeen R."/>
            <person name="Sims S."/>
            <person name="Skuce C.D."/>
            <person name="Smith M.L."/>
            <person name="Soderlund C."/>
            <person name="Steward C.A."/>
            <person name="Sulston J.E."/>
            <person name="Swann R.M."/>
            <person name="Sycamore N."/>
            <person name="Taylor R."/>
            <person name="Tee L."/>
            <person name="Thomas D.W."/>
            <person name="Thorpe A."/>
            <person name="Tracey A."/>
            <person name="Tromans A.C."/>
            <person name="Vaudin M."/>
            <person name="Wall M."/>
            <person name="Wallis J.M."/>
            <person name="Whitehead S.L."/>
            <person name="Whittaker P."/>
            <person name="Willey D.L."/>
            <person name="Williams L."/>
            <person name="Williams S.A."/>
            <person name="Wilming L."/>
            <person name="Wray P.W."/>
            <person name="Hubbard T."/>
            <person name="Durbin R.M."/>
            <person name="Bentley D.R."/>
            <person name="Beck S."/>
            <person name="Rogers J."/>
        </authorList>
    </citation>
    <scope>NUCLEOTIDE SEQUENCE [LARGE SCALE GENOMIC DNA]</scope>
</reference>
<reference key="2">
    <citation type="submission" date="2005-09" db="EMBL/GenBank/DDBJ databases">
        <authorList>
            <person name="Mural R.J."/>
            <person name="Istrail S."/>
            <person name="Sutton G.G."/>
            <person name="Florea L."/>
            <person name="Halpern A.L."/>
            <person name="Mobarry C.M."/>
            <person name="Lippert R."/>
            <person name="Walenz B."/>
            <person name="Shatkay H."/>
            <person name="Dew I."/>
            <person name="Miller J.R."/>
            <person name="Flanigan M.J."/>
            <person name="Edwards N.J."/>
            <person name="Bolanos R."/>
            <person name="Fasulo D."/>
            <person name="Halldorsson B.V."/>
            <person name="Hannenhalli S."/>
            <person name="Turner R."/>
            <person name="Yooseph S."/>
            <person name="Lu F."/>
            <person name="Nusskern D.R."/>
            <person name="Shue B.C."/>
            <person name="Zheng X.H."/>
            <person name="Zhong F."/>
            <person name="Delcher A.L."/>
            <person name="Huson D.H."/>
            <person name="Kravitz S.A."/>
            <person name="Mouchard L."/>
            <person name="Reinert K."/>
            <person name="Remington K.A."/>
            <person name="Clark A.G."/>
            <person name="Waterman M.S."/>
            <person name="Eichler E.E."/>
            <person name="Adams M.D."/>
            <person name="Hunkapiller M.W."/>
            <person name="Myers E.W."/>
            <person name="Venter J.C."/>
        </authorList>
    </citation>
    <scope>NUCLEOTIDE SEQUENCE [LARGE SCALE GENOMIC DNA]</scope>
</reference>
<reference key="3">
    <citation type="journal article" date="2004" name="Genome Res.">
        <title>The status, quality, and expansion of the NIH full-length cDNA project: the Mammalian Gene Collection (MGC).</title>
        <authorList>
            <consortium name="The MGC Project Team"/>
        </authorList>
    </citation>
    <scope>NUCLEOTIDE SEQUENCE [LARGE SCALE MRNA]</scope>
</reference>
<reference key="4">
    <citation type="journal article" date="2004" name="Nat. Genet.">
        <title>Complete sequencing and characterization of 21,243 full-length human cDNAs.</title>
        <authorList>
            <person name="Ota T."/>
            <person name="Suzuki Y."/>
            <person name="Nishikawa T."/>
            <person name="Otsuki T."/>
            <person name="Sugiyama T."/>
            <person name="Irie R."/>
            <person name="Wakamatsu A."/>
            <person name="Hayashi K."/>
            <person name="Sato H."/>
            <person name="Nagai K."/>
            <person name="Kimura K."/>
            <person name="Makita H."/>
            <person name="Sekine M."/>
            <person name="Obayashi M."/>
            <person name="Nishi T."/>
            <person name="Shibahara T."/>
            <person name="Tanaka T."/>
            <person name="Ishii S."/>
            <person name="Yamamoto J."/>
            <person name="Saito K."/>
            <person name="Kawai Y."/>
            <person name="Isono Y."/>
            <person name="Nakamura Y."/>
            <person name="Nagahari K."/>
            <person name="Murakami K."/>
            <person name="Yasuda T."/>
            <person name="Iwayanagi T."/>
            <person name="Wagatsuma M."/>
            <person name="Shiratori A."/>
            <person name="Sudo H."/>
            <person name="Hosoiri T."/>
            <person name="Kaku Y."/>
            <person name="Kodaira H."/>
            <person name="Kondo H."/>
            <person name="Sugawara M."/>
            <person name="Takahashi M."/>
            <person name="Kanda K."/>
            <person name="Yokoi T."/>
            <person name="Furuya T."/>
            <person name="Kikkawa E."/>
            <person name="Omura Y."/>
            <person name="Abe K."/>
            <person name="Kamihara K."/>
            <person name="Katsuta N."/>
            <person name="Sato K."/>
            <person name="Tanikawa M."/>
            <person name="Yamazaki M."/>
            <person name="Ninomiya K."/>
            <person name="Ishibashi T."/>
            <person name="Yamashita H."/>
            <person name="Murakawa K."/>
            <person name="Fujimori K."/>
            <person name="Tanai H."/>
            <person name="Kimata M."/>
            <person name="Watanabe M."/>
            <person name="Hiraoka S."/>
            <person name="Chiba Y."/>
            <person name="Ishida S."/>
            <person name="Ono Y."/>
            <person name="Takiguchi S."/>
            <person name="Watanabe S."/>
            <person name="Yosida M."/>
            <person name="Hotuta T."/>
            <person name="Kusano J."/>
            <person name="Kanehori K."/>
            <person name="Takahashi-Fujii A."/>
            <person name="Hara H."/>
            <person name="Tanase T.-O."/>
            <person name="Nomura Y."/>
            <person name="Togiya S."/>
            <person name="Komai F."/>
            <person name="Hara R."/>
            <person name="Takeuchi K."/>
            <person name="Arita M."/>
            <person name="Imose N."/>
            <person name="Musashino K."/>
            <person name="Yuuki H."/>
            <person name="Oshima A."/>
            <person name="Sasaki N."/>
            <person name="Aotsuka S."/>
            <person name="Yoshikawa Y."/>
            <person name="Matsunawa H."/>
            <person name="Ichihara T."/>
            <person name="Shiohata N."/>
            <person name="Sano S."/>
            <person name="Moriya S."/>
            <person name="Momiyama H."/>
            <person name="Satoh N."/>
            <person name="Takami S."/>
            <person name="Terashima Y."/>
            <person name="Suzuki O."/>
            <person name="Nakagawa S."/>
            <person name="Senoh A."/>
            <person name="Mizoguchi H."/>
            <person name="Goto Y."/>
            <person name="Shimizu F."/>
            <person name="Wakebe H."/>
            <person name="Hishigaki H."/>
            <person name="Watanabe T."/>
            <person name="Sugiyama A."/>
            <person name="Takemoto M."/>
            <person name="Kawakami B."/>
            <person name="Yamazaki M."/>
            <person name="Watanabe K."/>
            <person name="Kumagai A."/>
            <person name="Itakura S."/>
            <person name="Fukuzumi Y."/>
            <person name="Fujimori Y."/>
            <person name="Komiyama M."/>
            <person name="Tashiro H."/>
            <person name="Tanigami A."/>
            <person name="Fujiwara T."/>
            <person name="Ono T."/>
            <person name="Yamada K."/>
            <person name="Fujii Y."/>
            <person name="Ozaki K."/>
            <person name="Hirao M."/>
            <person name="Ohmori Y."/>
            <person name="Kawabata A."/>
            <person name="Hikiji T."/>
            <person name="Kobatake N."/>
            <person name="Inagaki H."/>
            <person name="Ikema Y."/>
            <person name="Okamoto S."/>
            <person name="Okitani R."/>
            <person name="Kawakami T."/>
            <person name="Noguchi S."/>
            <person name="Itoh T."/>
            <person name="Shigeta K."/>
            <person name="Senba T."/>
            <person name="Matsumura K."/>
            <person name="Nakajima Y."/>
            <person name="Mizuno T."/>
            <person name="Morinaga M."/>
            <person name="Sasaki M."/>
            <person name="Togashi T."/>
            <person name="Oyama M."/>
            <person name="Hata H."/>
            <person name="Watanabe M."/>
            <person name="Komatsu T."/>
            <person name="Mizushima-Sugano J."/>
            <person name="Satoh T."/>
            <person name="Shirai Y."/>
            <person name="Takahashi Y."/>
            <person name="Nakagawa K."/>
            <person name="Okumura K."/>
            <person name="Nagase T."/>
            <person name="Nomura N."/>
            <person name="Kikuchi H."/>
            <person name="Masuho Y."/>
            <person name="Yamashita R."/>
            <person name="Nakai K."/>
            <person name="Yada T."/>
            <person name="Nakamura Y."/>
            <person name="Ohara O."/>
            <person name="Isogai T."/>
            <person name="Sugano S."/>
        </authorList>
    </citation>
    <scope>NUCLEOTIDE SEQUENCE [LARGE SCALE MRNA] OF 181-747</scope>
    <source>
        <tissue>Tongue</tissue>
    </source>
</reference>
<reference key="5">
    <citation type="journal article" date="2014" name="Mol. Cancer Res.">
        <title>Conserved oncogenic behavior of the FAM83 family regulates MAPK signaling in human cancer.</title>
        <authorList>
            <person name="Cipriano R."/>
            <person name="Miskimen K.L."/>
            <person name="Bryson B.L."/>
            <person name="Foy C.R."/>
            <person name="Bartel C.A."/>
            <person name="Jackson M.W."/>
        </authorList>
    </citation>
    <scope>FUNCTION</scope>
    <scope>INTERACTION WITH RAF1</scope>
</reference>
<reference key="6">
    <citation type="journal article" date="2018" name="Sci. Signal.">
        <title>The DUF1669 domain of FAM83 family proteins anchor casein kinase 1 isoforms.</title>
        <authorList>
            <person name="Fulcher L.J."/>
            <person name="Bozatzi P."/>
            <person name="Tachie-Menson T."/>
            <person name="Wu K.Z.L."/>
            <person name="Cummins T.D."/>
            <person name="Bufton J.C."/>
            <person name="Pinkas D.M."/>
            <person name="Dunbar K."/>
            <person name="Shrestha S."/>
            <person name="Wood N.T."/>
            <person name="Weidlich S."/>
            <person name="Macartney T.J."/>
            <person name="Varghese J."/>
            <person name="Gourlay R."/>
            <person name="Campbell D.G."/>
            <person name="Dingwell K.S."/>
            <person name="Smith J.C."/>
            <person name="Bullock A.N."/>
            <person name="Sapkota G.P."/>
        </authorList>
    </citation>
    <scope>INTERACTION WITH CSNK1A1 AND CSNK1A1L</scope>
    <scope>SUBCELLULAR LOCATION</scope>
    <scope>PHOSPHORYLATION</scope>
    <scope>MUTAGENESIS OF ASP-259 AND PHE-293</scope>
</reference>
<gene>
    <name evidence="7" type="primary">FAM83C</name>
    <name evidence="7" type="synonym">C20orf128</name>
</gene>
<evidence type="ECO:0000256" key="1">
    <source>
        <dbReference type="SAM" id="MobiDB-lite"/>
    </source>
</evidence>
<evidence type="ECO:0000269" key="2">
    <source>
    </source>
</evidence>
<evidence type="ECO:0000269" key="3">
    <source>
    </source>
</evidence>
<evidence type="ECO:0000303" key="4">
    <source>
    </source>
</evidence>
<evidence type="ECO:0000305" key="5"/>
<evidence type="ECO:0000305" key="6">
    <source>
    </source>
</evidence>
<evidence type="ECO:0000312" key="7">
    <source>
        <dbReference type="HGNC" id="HGNC:16121"/>
    </source>
</evidence>